<accession>A0ZZ31</accession>
<dbReference type="EMBL" id="AP009123">
    <property type="protein sequence ID" value="BAF41243.1"/>
    <property type="molecule type" value="Genomic_DNA"/>
</dbReference>
<dbReference type="RefSeq" id="YP_913183.1">
    <property type="nucleotide sequence ID" value="NC_008641.1"/>
</dbReference>
<dbReference type="SMR" id="A0ZZ31"/>
<dbReference type="GeneID" id="4575218"/>
<dbReference type="GO" id="GO:0009535">
    <property type="term" value="C:chloroplast thylakoid membrane"/>
    <property type="evidence" value="ECO:0007669"/>
    <property type="project" value="UniProtKB-SubCell"/>
</dbReference>
<dbReference type="GO" id="GO:0009523">
    <property type="term" value="C:photosystem II"/>
    <property type="evidence" value="ECO:0007669"/>
    <property type="project" value="UniProtKB-KW"/>
</dbReference>
<dbReference type="GO" id="GO:0016168">
    <property type="term" value="F:chlorophyll binding"/>
    <property type="evidence" value="ECO:0007669"/>
    <property type="project" value="UniProtKB-UniRule"/>
</dbReference>
<dbReference type="GO" id="GO:0045156">
    <property type="term" value="F:electron transporter, transferring electrons within the cyclic electron transport pathway of photosynthesis activity"/>
    <property type="evidence" value="ECO:0007669"/>
    <property type="project" value="InterPro"/>
</dbReference>
<dbReference type="GO" id="GO:0046872">
    <property type="term" value="F:metal ion binding"/>
    <property type="evidence" value="ECO:0007669"/>
    <property type="project" value="UniProtKB-KW"/>
</dbReference>
<dbReference type="GO" id="GO:0009772">
    <property type="term" value="P:photosynthetic electron transport in photosystem II"/>
    <property type="evidence" value="ECO:0007669"/>
    <property type="project" value="InterPro"/>
</dbReference>
<dbReference type="FunFam" id="1.10.10.670:FF:000001">
    <property type="entry name" value="Photosystem II CP43 reaction center protein"/>
    <property type="match status" value="1"/>
</dbReference>
<dbReference type="Gene3D" id="1.10.10.670">
    <property type="entry name" value="photosystem ii from thermosynechococcus elongatus"/>
    <property type="match status" value="1"/>
</dbReference>
<dbReference type="HAMAP" id="MF_01496">
    <property type="entry name" value="PSII_PsbC_CP43"/>
    <property type="match status" value="1"/>
</dbReference>
<dbReference type="InterPro" id="IPR000932">
    <property type="entry name" value="PS_antenna-like"/>
</dbReference>
<dbReference type="InterPro" id="IPR036001">
    <property type="entry name" value="PS_II_antenna-like_sf"/>
</dbReference>
<dbReference type="InterPro" id="IPR005869">
    <property type="entry name" value="PSII_PsbC"/>
</dbReference>
<dbReference type="InterPro" id="IPR044900">
    <property type="entry name" value="PSII_PsbC_sf"/>
</dbReference>
<dbReference type="NCBIfam" id="TIGR01153">
    <property type="entry name" value="psbC"/>
    <property type="match status" value="1"/>
</dbReference>
<dbReference type="Pfam" id="PF00421">
    <property type="entry name" value="PSII"/>
    <property type="match status" value="1"/>
</dbReference>
<dbReference type="SUPFAM" id="SSF161077">
    <property type="entry name" value="Photosystem II antenna protein-like"/>
    <property type="match status" value="1"/>
</dbReference>
<reference key="1">
    <citation type="journal article" date="2006" name="Genes Genet. Syst.">
        <title>Complete nucleotide sequence of the cotton (Gossypium barbadense L.) chloroplast genome with a comparative analysis of sequences among 9 dicot plants.</title>
        <authorList>
            <person name="Ibrahim R.I.H."/>
            <person name="Azuma J."/>
            <person name="Sakamoto M."/>
        </authorList>
    </citation>
    <scope>NUCLEOTIDE SEQUENCE [LARGE SCALE GENOMIC DNA]</scope>
</reference>
<feature type="propeptide" id="PRO_0000431147" evidence="1">
    <location>
        <begin position="1"/>
        <end position="2"/>
    </location>
</feature>
<feature type="chain" id="PRO_0000361387" description="Photosystem II CP43 reaction center protein" evidence="1">
    <location>
        <begin position="3"/>
        <end position="461"/>
    </location>
</feature>
<feature type="transmembrane region" description="Helical" evidence="1">
    <location>
        <begin position="57"/>
        <end position="81"/>
    </location>
</feature>
<feature type="transmembrane region" description="Helical" evidence="1">
    <location>
        <begin position="122"/>
        <end position="143"/>
    </location>
</feature>
<feature type="transmembrane region" description="Helical" evidence="1">
    <location>
        <begin position="166"/>
        <end position="188"/>
    </location>
</feature>
<feature type="transmembrane region" description="Helical" evidence="1">
    <location>
        <begin position="243"/>
        <end position="263"/>
    </location>
</feature>
<feature type="transmembrane region" description="Helical" evidence="1">
    <location>
        <begin position="279"/>
        <end position="300"/>
    </location>
</feature>
<feature type="transmembrane region" description="Helical" evidence="1">
    <location>
        <begin position="435"/>
        <end position="459"/>
    </location>
</feature>
<feature type="binding site" evidence="1">
    <location>
        <position position="355"/>
    </location>
    <ligand>
        <name>[CaMn4O5] cluster</name>
        <dbReference type="ChEBI" id="CHEBI:189552"/>
    </ligand>
</feature>
<feature type="modified residue" description="N-acetylthreonine" evidence="1">
    <location>
        <position position="3"/>
    </location>
</feature>
<feature type="modified residue" description="Phosphothreonine" evidence="1">
    <location>
        <position position="3"/>
    </location>
</feature>
<evidence type="ECO:0000255" key="1">
    <source>
        <dbReference type="HAMAP-Rule" id="MF_01496"/>
    </source>
</evidence>
<comment type="function">
    <text evidence="1">One of the components of the core complex of photosystem II (PSII). It binds chlorophyll and helps catalyze the primary light-induced photochemical processes of PSII. PSII is a light-driven water:plastoquinone oxidoreductase, using light energy to abstract electrons from H(2)O, generating O(2) and a proton gradient subsequently used for ATP formation.</text>
</comment>
<comment type="cofactor">
    <text evidence="1">Binds multiple chlorophylls and provides some of the ligands for the Ca-4Mn-5O cluster of the oxygen-evolving complex. It may also provide a ligand for a Cl- that is required for oxygen evolution. PSII binds additional chlorophylls, carotenoids and specific lipids.</text>
</comment>
<comment type="subunit">
    <text evidence="1">PSII is composed of 1 copy each of membrane proteins PsbA, PsbB, PsbC, PsbD, PsbE, PsbF, PsbH, PsbI, PsbJ, PsbK, PsbL, PsbM, PsbT, PsbX, PsbY, PsbZ, Psb30/Ycf12, at least 3 peripheral proteins of the oxygen-evolving complex and a large number of cofactors. It forms dimeric complexes.</text>
</comment>
<comment type="subcellular location">
    <subcellularLocation>
        <location evidence="1">Plastid</location>
        <location evidence="1">Chloroplast thylakoid membrane</location>
        <topology evidence="1">Multi-pass membrane protein</topology>
    </subcellularLocation>
</comment>
<comment type="similarity">
    <text evidence="1">Belongs to the PsbB/PsbC family. PsbC subfamily.</text>
</comment>
<name>PSBC_GOSBA</name>
<gene>
    <name evidence="1" type="primary">psbC</name>
</gene>
<sequence length="461" mass="50331">METLFNGTLALAGRDQETTGFAWWAGNARLINLSGKLLGAHVAHAGLIVFWAGAMNLFEVAHFVPEKPMYEQGLILLPHLATLGWGVGPGGEVIDTFPYFVSGVLHLISSAVLGFGGIYHALLGPETLEESFPFFGYVWKDRNKMTTILGIHLILLGIGAFLLVFKALYFGGVYDTWAPGGGDVRKITNLTLSPSVIFGYLLKSPFGGEGWIVSVDDLEDIIGGHVWLGSICIFGGIWHILTKPFAWARRALVWSGEAYLSYSLGALSVFGFIACCFVWFNNTAYPSEFYGPTGPEASQAQAFTFLVRDQRLGANVGSAQGPTGLGKYLMRSPTGEVIFGGETMRFWDLRAPWLEPLRGPNGLDLSRLKKDIQPWQERRSAEYMTHAPLGSLNSVGGVATEINAVNYVSPRSWLATSHFVLGFFLFVGHLWHAGRARAAAAGFEKGIDRDFEPVLSMTPLN</sequence>
<protein>
    <recommendedName>
        <fullName evidence="1">Photosystem II CP43 reaction center protein</fullName>
    </recommendedName>
    <alternativeName>
        <fullName evidence="1">PSII 43 kDa protein</fullName>
    </alternativeName>
    <alternativeName>
        <fullName evidence="1">Protein CP-43</fullName>
    </alternativeName>
</protein>
<geneLocation type="chloroplast"/>
<keyword id="KW-0007">Acetylation</keyword>
<keyword id="KW-0148">Chlorophyll</keyword>
<keyword id="KW-0150">Chloroplast</keyword>
<keyword id="KW-0157">Chromophore</keyword>
<keyword id="KW-0464">Manganese</keyword>
<keyword id="KW-0472">Membrane</keyword>
<keyword id="KW-0479">Metal-binding</keyword>
<keyword id="KW-0597">Phosphoprotein</keyword>
<keyword id="KW-0602">Photosynthesis</keyword>
<keyword id="KW-0604">Photosystem II</keyword>
<keyword id="KW-0934">Plastid</keyword>
<keyword id="KW-0793">Thylakoid</keyword>
<keyword id="KW-0812">Transmembrane</keyword>
<keyword id="KW-1133">Transmembrane helix</keyword>
<organism>
    <name type="scientific">Gossypium barbadense</name>
    <name type="common">Sea Island cotton</name>
    <name type="synonym">Hibiscus barbadensis</name>
    <dbReference type="NCBI Taxonomy" id="3634"/>
    <lineage>
        <taxon>Eukaryota</taxon>
        <taxon>Viridiplantae</taxon>
        <taxon>Streptophyta</taxon>
        <taxon>Embryophyta</taxon>
        <taxon>Tracheophyta</taxon>
        <taxon>Spermatophyta</taxon>
        <taxon>Magnoliopsida</taxon>
        <taxon>eudicotyledons</taxon>
        <taxon>Gunneridae</taxon>
        <taxon>Pentapetalae</taxon>
        <taxon>rosids</taxon>
        <taxon>malvids</taxon>
        <taxon>Malvales</taxon>
        <taxon>Malvaceae</taxon>
        <taxon>Malvoideae</taxon>
        <taxon>Gossypium</taxon>
    </lineage>
</organism>
<proteinExistence type="inferred from homology"/>